<dbReference type="EC" id="3.1.1.29" evidence="1"/>
<dbReference type="EMBL" id="BA000039">
    <property type="protein sequence ID" value="BAC08936.1"/>
    <property type="molecule type" value="Genomic_DNA"/>
</dbReference>
<dbReference type="RefSeq" id="NP_682174.1">
    <property type="nucleotide sequence ID" value="NC_004113.1"/>
</dbReference>
<dbReference type="RefSeq" id="WP_011057224.1">
    <property type="nucleotide sequence ID" value="NC_004113.1"/>
</dbReference>
<dbReference type="SMR" id="Q8DJ45"/>
<dbReference type="STRING" id="197221.gene:10747982"/>
<dbReference type="EnsemblBacteria" id="BAC08936">
    <property type="protein sequence ID" value="BAC08936"/>
    <property type="gene ID" value="BAC08936"/>
</dbReference>
<dbReference type="KEGG" id="tel:tll1384"/>
<dbReference type="PATRIC" id="fig|197221.4.peg.1456"/>
<dbReference type="eggNOG" id="COG0193">
    <property type="taxonomic scope" value="Bacteria"/>
</dbReference>
<dbReference type="Proteomes" id="UP000000440">
    <property type="component" value="Chromosome"/>
</dbReference>
<dbReference type="GO" id="GO:0005737">
    <property type="term" value="C:cytoplasm"/>
    <property type="evidence" value="ECO:0007669"/>
    <property type="project" value="UniProtKB-SubCell"/>
</dbReference>
<dbReference type="GO" id="GO:0004045">
    <property type="term" value="F:peptidyl-tRNA hydrolase activity"/>
    <property type="evidence" value="ECO:0007669"/>
    <property type="project" value="UniProtKB-UniRule"/>
</dbReference>
<dbReference type="GO" id="GO:0000049">
    <property type="term" value="F:tRNA binding"/>
    <property type="evidence" value="ECO:0007669"/>
    <property type="project" value="UniProtKB-UniRule"/>
</dbReference>
<dbReference type="GO" id="GO:0006515">
    <property type="term" value="P:protein quality control for misfolded or incompletely synthesized proteins"/>
    <property type="evidence" value="ECO:0007669"/>
    <property type="project" value="UniProtKB-UniRule"/>
</dbReference>
<dbReference type="GO" id="GO:0072344">
    <property type="term" value="P:rescue of stalled ribosome"/>
    <property type="evidence" value="ECO:0007669"/>
    <property type="project" value="UniProtKB-UniRule"/>
</dbReference>
<dbReference type="CDD" id="cd00462">
    <property type="entry name" value="PTH"/>
    <property type="match status" value="1"/>
</dbReference>
<dbReference type="FunFam" id="3.40.50.1470:FF:000001">
    <property type="entry name" value="Peptidyl-tRNA hydrolase"/>
    <property type="match status" value="1"/>
</dbReference>
<dbReference type="Gene3D" id="3.40.50.1470">
    <property type="entry name" value="Peptidyl-tRNA hydrolase"/>
    <property type="match status" value="1"/>
</dbReference>
<dbReference type="HAMAP" id="MF_00083">
    <property type="entry name" value="Pept_tRNA_hydro_bact"/>
    <property type="match status" value="1"/>
</dbReference>
<dbReference type="InterPro" id="IPR001328">
    <property type="entry name" value="Pept_tRNA_hydro"/>
</dbReference>
<dbReference type="InterPro" id="IPR018171">
    <property type="entry name" value="Pept_tRNA_hydro_CS"/>
</dbReference>
<dbReference type="InterPro" id="IPR036416">
    <property type="entry name" value="Pept_tRNA_hydro_sf"/>
</dbReference>
<dbReference type="NCBIfam" id="TIGR00447">
    <property type="entry name" value="pth"/>
    <property type="match status" value="1"/>
</dbReference>
<dbReference type="PANTHER" id="PTHR17224">
    <property type="entry name" value="PEPTIDYL-TRNA HYDROLASE"/>
    <property type="match status" value="1"/>
</dbReference>
<dbReference type="PANTHER" id="PTHR17224:SF1">
    <property type="entry name" value="PEPTIDYL-TRNA HYDROLASE"/>
    <property type="match status" value="1"/>
</dbReference>
<dbReference type="Pfam" id="PF01195">
    <property type="entry name" value="Pept_tRNA_hydro"/>
    <property type="match status" value="1"/>
</dbReference>
<dbReference type="SUPFAM" id="SSF53178">
    <property type="entry name" value="Peptidyl-tRNA hydrolase-like"/>
    <property type="match status" value="1"/>
</dbReference>
<dbReference type="PROSITE" id="PS01195">
    <property type="entry name" value="PEPT_TRNA_HYDROL_1"/>
    <property type="match status" value="1"/>
</dbReference>
<dbReference type="PROSITE" id="PS01196">
    <property type="entry name" value="PEPT_TRNA_HYDROL_2"/>
    <property type="match status" value="1"/>
</dbReference>
<feature type="chain" id="PRO_0000187837" description="Peptidyl-tRNA hydrolase">
    <location>
        <begin position="1"/>
        <end position="205"/>
    </location>
</feature>
<feature type="active site" description="Proton acceptor" evidence="1">
    <location>
        <position position="23"/>
    </location>
</feature>
<feature type="binding site" evidence="1">
    <location>
        <position position="18"/>
    </location>
    <ligand>
        <name>tRNA</name>
        <dbReference type="ChEBI" id="CHEBI:17843"/>
    </ligand>
</feature>
<feature type="binding site" evidence="1">
    <location>
        <position position="69"/>
    </location>
    <ligand>
        <name>tRNA</name>
        <dbReference type="ChEBI" id="CHEBI:17843"/>
    </ligand>
</feature>
<feature type="binding site" evidence="1">
    <location>
        <position position="71"/>
    </location>
    <ligand>
        <name>tRNA</name>
        <dbReference type="ChEBI" id="CHEBI:17843"/>
    </ligand>
</feature>
<feature type="binding site" evidence="1">
    <location>
        <position position="117"/>
    </location>
    <ligand>
        <name>tRNA</name>
        <dbReference type="ChEBI" id="CHEBI:17843"/>
    </ligand>
</feature>
<feature type="site" description="Discriminates between blocked and unblocked aminoacyl-tRNA" evidence="1">
    <location>
        <position position="13"/>
    </location>
</feature>
<feature type="site" description="Stabilizes the basic form of H active site to accept a proton" evidence="1">
    <location>
        <position position="96"/>
    </location>
</feature>
<gene>
    <name evidence="1" type="primary">pth</name>
    <name type="ordered locus">tll1384</name>
</gene>
<organism>
    <name type="scientific">Thermosynechococcus vestitus (strain NIES-2133 / IAM M-273 / BP-1)</name>
    <dbReference type="NCBI Taxonomy" id="197221"/>
    <lineage>
        <taxon>Bacteria</taxon>
        <taxon>Bacillati</taxon>
        <taxon>Cyanobacteriota</taxon>
        <taxon>Cyanophyceae</taxon>
        <taxon>Acaryochloridales</taxon>
        <taxon>Thermosynechococcaceae</taxon>
        <taxon>Thermosynechococcus</taxon>
    </lineage>
</organism>
<name>PTH_THEVB</name>
<protein>
    <recommendedName>
        <fullName evidence="1">Peptidyl-tRNA hydrolase</fullName>
        <shortName evidence="1">Pth</shortName>
        <ecNumber evidence="1">3.1.1.29</ecNumber>
    </recommendedName>
</protein>
<accession>Q8DJ45</accession>
<reference key="1">
    <citation type="journal article" date="2002" name="DNA Res.">
        <title>Complete genome structure of the thermophilic cyanobacterium Thermosynechococcus elongatus BP-1.</title>
        <authorList>
            <person name="Nakamura Y."/>
            <person name="Kaneko T."/>
            <person name="Sato S."/>
            <person name="Ikeuchi M."/>
            <person name="Katoh H."/>
            <person name="Sasamoto S."/>
            <person name="Watanabe A."/>
            <person name="Iriguchi M."/>
            <person name="Kawashima K."/>
            <person name="Kimura T."/>
            <person name="Kishida Y."/>
            <person name="Kiyokawa C."/>
            <person name="Kohara M."/>
            <person name="Matsumoto M."/>
            <person name="Matsuno A."/>
            <person name="Nakazaki N."/>
            <person name="Shimpo S."/>
            <person name="Sugimoto M."/>
            <person name="Takeuchi C."/>
            <person name="Yamada M."/>
            <person name="Tabata S."/>
        </authorList>
    </citation>
    <scope>NUCLEOTIDE SEQUENCE [LARGE SCALE GENOMIC DNA]</scope>
    <source>
        <strain>NIES-2133 / IAM M-273 / BP-1</strain>
    </source>
</reference>
<evidence type="ECO:0000255" key="1">
    <source>
        <dbReference type="HAMAP-Rule" id="MF_00083"/>
    </source>
</evidence>
<proteinExistence type="inferred from homology"/>
<keyword id="KW-0963">Cytoplasm</keyword>
<keyword id="KW-0378">Hydrolase</keyword>
<keyword id="KW-1185">Reference proteome</keyword>
<keyword id="KW-0694">RNA-binding</keyword>
<keyword id="KW-0820">tRNA-binding</keyword>
<comment type="function">
    <text evidence="1">Hydrolyzes ribosome-free peptidyl-tRNAs (with 1 or more amino acids incorporated), which drop off the ribosome during protein synthesis, or as a result of ribosome stalling.</text>
</comment>
<comment type="function">
    <text evidence="1">Catalyzes the release of premature peptidyl moieties from peptidyl-tRNA molecules trapped in stalled 50S ribosomal subunits, and thus maintains levels of free tRNAs and 50S ribosomes.</text>
</comment>
<comment type="catalytic activity">
    <reaction evidence="1">
        <text>an N-acyl-L-alpha-aminoacyl-tRNA + H2O = an N-acyl-L-amino acid + a tRNA + H(+)</text>
        <dbReference type="Rhea" id="RHEA:54448"/>
        <dbReference type="Rhea" id="RHEA-COMP:10123"/>
        <dbReference type="Rhea" id="RHEA-COMP:13883"/>
        <dbReference type="ChEBI" id="CHEBI:15377"/>
        <dbReference type="ChEBI" id="CHEBI:15378"/>
        <dbReference type="ChEBI" id="CHEBI:59874"/>
        <dbReference type="ChEBI" id="CHEBI:78442"/>
        <dbReference type="ChEBI" id="CHEBI:138191"/>
        <dbReference type="EC" id="3.1.1.29"/>
    </reaction>
</comment>
<comment type="subunit">
    <text evidence="1">Monomer.</text>
</comment>
<comment type="subcellular location">
    <subcellularLocation>
        <location evidence="1">Cytoplasm</location>
    </subcellularLocation>
</comment>
<comment type="similarity">
    <text evidence="1">Belongs to the PTH family.</text>
</comment>
<sequence length="205" mass="22550">MALQPCVIVGLGNPGIEYATTRHNVGFRVLDTLAQRYRVQLTQQRRFLGEVAEVLIQGQKVRLLKPTTYMNSSGQSLHALLNFYKLPLERTLVVHDDADLPLGRLRLRLSGSTGGHNGIKSIIQHCHSQQFPRLKVGIAFGDRLQQQTGPRNAVPFVLGHFSATELAILPAVLDLAVDAIELSIQSGVEVAMNRYNGKSIPLPQA</sequence>